<organism>
    <name type="scientific">Buchnera aphidicola subsp. Schizaphis graminum (strain Sg)</name>
    <dbReference type="NCBI Taxonomy" id="198804"/>
    <lineage>
        <taxon>Bacteria</taxon>
        <taxon>Pseudomonadati</taxon>
        <taxon>Pseudomonadota</taxon>
        <taxon>Gammaproteobacteria</taxon>
        <taxon>Enterobacterales</taxon>
        <taxon>Erwiniaceae</taxon>
        <taxon>Buchnera</taxon>
    </lineage>
</organism>
<keyword id="KW-0012">Acyltransferase</keyword>
<keyword id="KW-0450">Lipoyl</keyword>
<keyword id="KW-0808">Transferase</keyword>
<sequence>MPDIGLEEVEVTEILVKIGEEIKLDQGLITVEGDKASMEIPSPISGIVKDITIKIGEKVKTSSIIMIFKVNNLNSIKNEKDLNYIKTEKKLNENFLEEKKDIKKIVLVHATPVVRRLARHLNVDLKNITPSGPKNRILKEDIELYIRNNTSNKSSFNIEKNNTTNFHKDLFNEIPITNIQQIIGKNLHQNWVNIPHVTQFDEVNITLLEEFRHKYNTEKKQKNNMCSKITILPFIIKSVAYGLLEFPIFNSSLSVNKKTIFLKKYVNVGIAVDVQNALFVPVLKNVDKKNIANLSSELIFLSKKAHENKLDASDMKDGCFTISNLGGIGGSWFSPIINSPEVAILGVSKALIKPLWNGKEFIPSLMLPLSLSYDHRVINGADAARFLTFIGKMLSDIRFLIM</sequence>
<proteinExistence type="inferred from homology"/>
<accession>Q8K9T8</accession>
<feature type="chain" id="PRO_0000162276" description="Dihydrolipoyllysine-residue acetyltransferase component of pyruvate dehydrogenase complex">
    <location>
        <begin position="1"/>
        <end position="402"/>
    </location>
</feature>
<feature type="domain" description="Lipoyl-binding" evidence="3">
    <location>
        <begin position="1"/>
        <end position="69"/>
    </location>
</feature>
<feature type="domain" description="Peripheral subunit-binding (PSBD)" evidence="4">
    <location>
        <begin position="109"/>
        <end position="146"/>
    </location>
</feature>
<feature type="active site" evidence="2">
    <location>
        <position position="375"/>
    </location>
</feature>
<feature type="modified residue" description="N6-lipoyllysine" evidence="1 3">
    <location>
        <position position="35"/>
    </location>
</feature>
<dbReference type="EC" id="2.3.1.12"/>
<dbReference type="EMBL" id="AE013218">
    <property type="protein sequence ID" value="AAM67764.1"/>
    <property type="status" value="ALT_INIT"/>
    <property type="molecule type" value="Genomic_DNA"/>
</dbReference>
<dbReference type="SMR" id="Q8K9T8"/>
<dbReference type="STRING" id="198804.BUsg_200"/>
<dbReference type="KEGG" id="bas:BUsg_200"/>
<dbReference type="eggNOG" id="COG0508">
    <property type="taxonomic scope" value="Bacteria"/>
</dbReference>
<dbReference type="HOGENOM" id="CLU_016733_10_0_6"/>
<dbReference type="Proteomes" id="UP000000416">
    <property type="component" value="Chromosome"/>
</dbReference>
<dbReference type="GO" id="GO:0005737">
    <property type="term" value="C:cytoplasm"/>
    <property type="evidence" value="ECO:0007669"/>
    <property type="project" value="TreeGrafter"/>
</dbReference>
<dbReference type="GO" id="GO:0004742">
    <property type="term" value="F:dihydrolipoyllysine-residue acetyltransferase activity"/>
    <property type="evidence" value="ECO:0007669"/>
    <property type="project" value="UniProtKB-EC"/>
</dbReference>
<dbReference type="GO" id="GO:0031405">
    <property type="term" value="F:lipoic acid binding"/>
    <property type="evidence" value="ECO:0007669"/>
    <property type="project" value="TreeGrafter"/>
</dbReference>
<dbReference type="GO" id="GO:0006086">
    <property type="term" value="P:pyruvate decarboxylation to acetyl-CoA"/>
    <property type="evidence" value="ECO:0007669"/>
    <property type="project" value="TreeGrafter"/>
</dbReference>
<dbReference type="CDD" id="cd06849">
    <property type="entry name" value="lipoyl_domain"/>
    <property type="match status" value="1"/>
</dbReference>
<dbReference type="FunFam" id="3.30.559.10:FF:000004">
    <property type="entry name" value="Acetyltransferase component of pyruvate dehydrogenase complex"/>
    <property type="match status" value="1"/>
</dbReference>
<dbReference type="Gene3D" id="2.40.50.100">
    <property type="match status" value="1"/>
</dbReference>
<dbReference type="Gene3D" id="3.30.559.10">
    <property type="entry name" value="Chloramphenicol acetyltransferase-like domain"/>
    <property type="match status" value="1"/>
</dbReference>
<dbReference type="Gene3D" id="4.10.320.10">
    <property type="entry name" value="E3-binding domain"/>
    <property type="match status" value="1"/>
</dbReference>
<dbReference type="InterPro" id="IPR003016">
    <property type="entry name" value="2-oxoA_DH_lipoyl-BS"/>
</dbReference>
<dbReference type="InterPro" id="IPR001078">
    <property type="entry name" value="2-oxoacid_DH_actylTfrase"/>
</dbReference>
<dbReference type="InterPro" id="IPR050743">
    <property type="entry name" value="2-oxoacid_DH_E2_comp"/>
</dbReference>
<dbReference type="InterPro" id="IPR000089">
    <property type="entry name" value="Biotin_lipoyl"/>
</dbReference>
<dbReference type="InterPro" id="IPR023213">
    <property type="entry name" value="CAT-like_dom_sf"/>
</dbReference>
<dbReference type="InterPro" id="IPR036625">
    <property type="entry name" value="E3-bd_dom_sf"/>
</dbReference>
<dbReference type="InterPro" id="IPR004167">
    <property type="entry name" value="PSBD"/>
</dbReference>
<dbReference type="InterPro" id="IPR011053">
    <property type="entry name" value="Single_hybrid_motif"/>
</dbReference>
<dbReference type="PANTHER" id="PTHR43178">
    <property type="entry name" value="DIHYDROLIPOAMIDE ACETYLTRANSFERASE COMPONENT OF PYRUVATE DEHYDROGENASE COMPLEX"/>
    <property type="match status" value="1"/>
</dbReference>
<dbReference type="PANTHER" id="PTHR43178:SF2">
    <property type="entry name" value="DIHYDROLIPOYLLYSINE-RESIDUE ACETYLTRANSFERASE COMPONENT OF PYRUVATE DEHYDROGENASE COMPLEX"/>
    <property type="match status" value="1"/>
</dbReference>
<dbReference type="Pfam" id="PF00198">
    <property type="entry name" value="2-oxoacid_dh"/>
    <property type="match status" value="1"/>
</dbReference>
<dbReference type="Pfam" id="PF00364">
    <property type="entry name" value="Biotin_lipoyl"/>
    <property type="match status" value="1"/>
</dbReference>
<dbReference type="Pfam" id="PF02817">
    <property type="entry name" value="E3_binding"/>
    <property type="match status" value="1"/>
</dbReference>
<dbReference type="SUPFAM" id="SSF52777">
    <property type="entry name" value="CoA-dependent acyltransferases"/>
    <property type="match status" value="1"/>
</dbReference>
<dbReference type="SUPFAM" id="SSF47005">
    <property type="entry name" value="Peripheral subunit-binding domain of 2-oxo acid dehydrogenase complex"/>
    <property type="match status" value="1"/>
</dbReference>
<dbReference type="SUPFAM" id="SSF51230">
    <property type="entry name" value="Single hybrid motif"/>
    <property type="match status" value="1"/>
</dbReference>
<dbReference type="PROSITE" id="PS50968">
    <property type="entry name" value="BIOTINYL_LIPOYL"/>
    <property type="match status" value="1"/>
</dbReference>
<dbReference type="PROSITE" id="PS00189">
    <property type="entry name" value="LIPOYL"/>
    <property type="match status" value="1"/>
</dbReference>
<dbReference type="PROSITE" id="PS51826">
    <property type="entry name" value="PSBD"/>
    <property type="match status" value="1"/>
</dbReference>
<reference key="1">
    <citation type="journal article" date="2002" name="Science">
        <title>50 million years of genomic stasis in endosymbiotic bacteria.</title>
        <authorList>
            <person name="Tamas I."/>
            <person name="Klasson L."/>
            <person name="Canbaeck B."/>
            <person name="Naeslund A.K."/>
            <person name="Eriksson A.-S."/>
            <person name="Wernegreen J.J."/>
            <person name="Sandstroem J.P."/>
            <person name="Moran N.A."/>
            <person name="Andersson S.G.E."/>
        </authorList>
    </citation>
    <scope>NUCLEOTIDE SEQUENCE [LARGE SCALE GENOMIC DNA]</scope>
    <source>
        <strain>Sg</strain>
    </source>
</reference>
<evidence type="ECO:0000250" key="1"/>
<evidence type="ECO:0000255" key="2"/>
<evidence type="ECO:0000255" key="3">
    <source>
        <dbReference type="PROSITE-ProRule" id="PRU01066"/>
    </source>
</evidence>
<evidence type="ECO:0000255" key="4">
    <source>
        <dbReference type="PROSITE-ProRule" id="PRU01170"/>
    </source>
</evidence>
<evidence type="ECO:0000305" key="5"/>
<name>ODP2_BUCAP</name>
<comment type="function">
    <text evidence="1">The pyruvate dehydrogenase complex catalyzes the overall conversion of pyruvate to acetyl-CoA and CO(2). It contains multiple copies of three enzymatic components: pyruvate dehydrogenase (E1), dihydrolipoamide acetyltransferase (E2) and lipoamide dehydrogenase (E3) (By similarity).</text>
</comment>
<comment type="catalytic activity">
    <reaction>
        <text>N(6)-[(R)-dihydrolipoyl]-L-lysyl-[protein] + acetyl-CoA = N(6)-[(R)-S(8)-acetyldihydrolipoyl]-L-lysyl-[protein] + CoA</text>
        <dbReference type="Rhea" id="RHEA:17017"/>
        <dbReference type="Rhea" id="RHEA-COMP:10475"/>
        <dbReference type="Rhea" id="RHEA-COMP:10478"/>
        <dbReference type="ChEBI" id="CHEBI:57287"/>
        <dbReference type="ChEBI" id="CHEBI:57288"/>
        <dbReference type="ChEBI" id="CHEBI:83100"/>
        <dbReference type="ChEBI" id="CHEBI:83111"/>
        <dbReference type="EC" id="2.3.1.12"/>
    </reaction>
</comment>
<comment type="cofactor">
    <cofactor evidence="1">
        <name>(R)-lipoate</name>
        <dbReference type="ChEBI" id="CHEBI:83088"/>
    </cofactor>
    <text evidence="1">Binds 1 lipoyl cofactor covalently.</text>
</comment>
<comment type="subunit">
    <text evidence="1">Forms a 24-polypeptide structural core with octahedral symmetry.</text>
</comment>
<comment type="similarity">
    <text evidence="5">Belongs to the 2-oxoacid dehydrogenase family.</text>
</comment>
<comment type="sequence caution" evidence="5">
    <conflict type="erroneous initiation">
        <sequence resource="EMBL-CDS" id="AAM67764"/>
    </conflict>
</comment>
<gene>
    <name type="primary">aceF</name>
    <name type="ordered locus">BUsg_200</name>
</gene>
<protein>
    <recommendedName>
        <fullName>Dihydrolipoyllysine-residue acetyltransferase component of pyruvate dehydrogenase complex</fullName>
        <ecNumber>2.3.1.12</ecNumber>
    </recommendedName>
    <alternativeName>
        <fullName>Dihydrolipoamide acetyltransferase component of pyruvate dehydrogenase complex</fullName>
    </alternativeName>
    <alternativeName>
        <fullName>E2</fullName>
    </alternativeName>
</protein>